<dbReference type="EMBL" id="AE006641">
    <property type="protein sequence ID" value="AAK40503.1"/>
    <property type="molecule type" value="Genomic_DNA"/>
</dbReference>
<dbReference type="EMBL" id="BK000545">
    <property type="protein sequence ID" value="DAA00051.1"/>
    <property type="molecule type" value="Genomic_DNA"/>
</dbReference>
<dbReference type="PIR" id="H90155">
    <property type="entry name" value="H90155"/>
</dbReference>
<dbReference type="RefSeq" id="WP_009990382.1">
    <property type="nucleotide sequence ID" value="NC_002754.1"/>
</dbReference>
<dbReference type="SMR" id="Q980W9"/>
<dbReference type="STRING" id="273057.SSO0157"/>
<dbReference type="PaxDb" id="273057-SSO0157"/>
<dbReference type="EnsemblBacteria" id="AAK40503">
    <property type="protein sequence ID" value="AAK40503"/>
    <property type="gene ID" value="SSO0157"/>
</dbReference>
<dbReference type="GeneID" id="44129119"/>
<dbReference type="KEGG" id="sso:SSO0157"/>
<dbReference type="PATRIC" id="fig|273057.12.peg.154"/>
<dbReference type="eggNOG" id="arCOG01580">
    <property type="taxonomic scope" value="Archaea"/>
</dbReference>
<dbReference type="HOGENOM" id="CLU_091233_5_3_2"/>
<dbReference type="InParanoid" id="Q980W9"/>
<dbReference type="PhylomeDB" id="Q980W9"/>
<dbReference type="UniPathway" id="UPA00033"/>
<dbReference type="Proteomes" id="UP000001974">
    <property type="component" value="Chromosome"/>
</dbReference>
<dbReference type="GO" id="GO:0005737">
    <property type="term" value="C:cytoplasm"/>
    <property type="evidence" value="ECO:0007669"/>
    <property type="project" value="UniProtKB-SubCell"/>
</dbReference>
<dbReference type="GO" id="GO:0043565">
    <property type="term" value="F:sequence-specific DNA binding"/>
    <property type="evidence" value="ECO:0007669"/>
    <property type="project" value="InterPro"/>
</dbReference>
<dbReference type="GO" id="GO:0019878">
    <property type="term" value="P:lysine biosynthetic process via aminoadipic acid"/>
    <property type="evidence" value="ECO:0007669"/>
    <property type="project" value="UniProtKB-UniPathway"/>
</dbReference>
<dbReference type="CDD" id="cd00090">
    <property type="entry name" value="HTH_ARSR"/>
    <property type="match status" value="1"/>
</dbReference>
<dbReference type="Gene3D" id="3.30.70.920">
    <property type="match status" value="1"/>
</dbReference>
<dbReference type="Gene3D" id="1.10.10.10">
    <property type="entry name" value="Winged helix-like DNA-binding domain superfamily/Winged helix DNA-binding domain"/>
    <property type="match status" value="1"/>
</dbReference>
<dbReference type="InterPro" id="IPR011991">
    <property type="entry name" value="ArsR-like_HTH"/>
</dbReference>
<dbReference type="InterPro" id="IPR000485">
    <property type="entry name" value="AsnC-type_HTH_dom"/>
</dbReference>
<dbReference type="InterPro" id="IPR011008">
    <property type="entry name" value="Dimeric_a/b-barrel"/>
</dbReference>
<dbReference type="InterPro" id="IPR053483">
    <property type="entry name" value="HTH-Lysine_Regulator"/>
</dbReference>
<dbReference type="InterPro" id="IPR050684">
    <property type="entry name" value="HTH-Siroheme_Decarb"/>
</dbReference>
<dbReference type="InterPro" id="IPR019888">
    <property type="entry name" value="Tscrpt_reg_AsnC-like"/>
</dbReference>
<dbReference type="InterPro" id="IPR019887">
    <property type="entry name" value="Tscrpt_reg_AsnC/Lrp_C"/>
</dbReference>
<dbReference type="InterPro" id="IPR036388">
    <property type="entry name" value="WH-like_DNA-bd_sf"/>
</dbReference>
<dbReference type="InterPro" id="IPR036390">
    <property type="entry name" value="WH_DNA-bd_sf"/>
</dbReference>
<dbReference type="NCBIfam" id="NF040947">
    <property type="entry name" value="trans_reg_LysM"/>
    <property type="match status" value="1"/>
</dbReference>
<dbReference type="PANTHER" id="PTHR43413:SF4">
    <property type="entry name" value="HTH-TYPE TRANSCRIPTIONAL REGULATOR LYSM"/>
    <property type="match status" value="1"/>
</dbReference>
<dbReference type="PANTHER" id="PTHR43413">
    <property type="entry name" value="TRANSCRIPTIONAL REGULATOR, ASNC FAMILY"/>
    <property type="match status" value="1"/>
</dbReference>
<dbReference type="Pfam" id="PF01037">
    <property type="entry name" value="AsnC_trans_reg"/>
    <property type="match status" value="1"/>
</dbReference>
<dbReference type="Pfam" id="PF13412">
    <property type="entry name" value="HTH_24"/>
    <property type="match status" value="1"/>
</dbReference>
<dbReference type="PRINTS" id="PR00033">
    <property type="entry name" value="HTHASNC"/>
</dbReference>
<dbReference type="SMART" id="SM00344">
    <property type="entry name" value="HTH_ASNC"/>
    <property type="match status" value="1"/>
</dbReference>
<dbReference type="SUPFAM" id="SSF54909">
    <property type="entry name" value="Dimeric alpha+beta barrel"/>
    <property type="match status" value="1"/>
</dbReference>
<dbReference type="SUPFAM" id="SSF46785">
    <property type="entry name" value="Winged helix' DNA-binding domain"/>
    <property type="match status" value="1"/>
</dbReference>
<dbReference type="PROSITE" id="PS50956">
    <property type="entry name" value="HTH_ASNC_2"/>
    <property type="match status" value="1"/>
</dbReference>
<gene>
    <name type="primary">lysM</name>
    <name type="ordered locus">SSO0157</name>
</gene>
<organism>
    <name type="scientific">Saccharolobus solfataricus (strain ATCC 35092 / DSM 1617 / JCM 11322 / P2)</name>
    <name type="common">Sulfolobus solfataricus</name>
    <dbReference type="NCBI Taxonomy" id="273057"/>
    <lineage>
        <taxon>Archaea</taxon>
        <taxon>Thermoproteota</taxon>
        <taxon>Thermoprotei</taxon>
        <taxon>Sulfolobales</taxon>
        <taxon>Sulfolobaceae</taxon>
        <taxon>Saccharolobus</taxon>
    </lineage>
</organism>
<comment type="function">
    <text evidence="2">In the absence or at low concentrations of lysine, activates the biosynthesis of this amino acid via the alpha-aminoadipate (AAA) pathway.</text>
</comment>
<comment type="pathway">
    <text>Amino-acid biosynthesis; L-lysine biosynthesis via AAA pathway [regulation].</text>
</comment>
<comment type="subunit">
    <text evidence="2">Homotetramer.</text>
</comment>
<comment type="subcellular location">
    <subcellularLocation>
        <location evidence="3">Cytoplasm</location>
    </subcellularLocation>
</comment>
<comment type="induction">
    <text evidence="2">Constitutively expressed.</text>
</comment>
<protein>
    <recommendedName>
        <fullName>HTH-type transcriptional regulator LysM</fullName>
    </recommendedName>
</protein>
<reference key="1">
    <citation type="journal article" date="2001" name="Proc. Natl. Acad. Sci. U.S.A.">
        <title>The complete genome of the crenarchaeon Sulfolobus solfataricus P2.</title>
        <authorList>
            <person name="She Q."/>
            <person name="Singh R.K."/>
            <person name="Confalonieri F."/>
            <person name="Zivanovic Y."/>
            <person name="Allard G."/>
            <person name="Awayez M.J."/>
            <person name="Chan-Weiher C.C.-Y."/>
            <person name="Clausen I.G."/>
            <person name="Curtis B.A."/>
            <person name="De Moors A."/>
            <person name="Erauso G."/>
            <person name="Fletcher C."/>
            <person name="Gordon P.M.K."/>
            <person name="Heikamp-de Jong I."/>
            <person name="Jeffries A.C."/>
            <person name="Kozera C.J."/>
            <person name="Medina N."/>
            <person name="Peng X."/>
            <person name="Thi-Ngoc H.P."/>
            <person name="Redder P."/>
            <person name="Schenk M.E."/>
            <person name="Theriault C."/>
            <person name="Tolstrup N."/>
            <person name="Charlebois R.L."/>
            <person name="Doolittle W.F."/>
            <person name="Duguet M."/>
            <person name="Gaasterland T."/>
            <person name="Garrett R.A."/>
            <person name="Ragan M.A."/>
            <person name="Sensen C.W."/>
            <person name="Van der Oost J."/>
        </authorList>
    </citation>
    <scope>NUCLEOTIDE SEQUENCE [LARGE SCALE GENOMIC DNA]</scope>
    <source>
        <strain>ATCC 35092 / DSM 1617 / JCM 11322 / P2</strain>
    </source>
</reference>
<reference key="2">
    <citation type="journal article" date="2002" name="J. Biol. Chem.">
        <title>The Sulfolobus solfataricus Lrp-like protein LysM regulates lysine biosynthesis in response to lysine availability.</title>
        <authorList>
            <person name="Brinkman A.B."/>
            <person name="Bell S.D."/>
            <person name="Lebbink R.J."/>
            <person name="de Vos W.M."/>
            <person name="van der Oost J."/>
        </authorList>
    </citation>
    <scope>FUNCTION IN LYSINE BIOSYNTHESIS</scope>
    <scope>INDUCTION</scope>
    <scope>SUBUNIT</scope>
    <source>
        <strain>ATCC 35092 / DSM 1617 / JCM 11322 / P2</strain>
    </source>
</reference>
<name>LYSM_SACS2</name>
<feature type="chain" id="PRO_0000111742" description="HTH-type transcriptional regulator LysM">
    <location>
        <begin position="1"/>
        <end position="142"/>
    </location>
</feature>
<feature type="domain" description="HTH asnC-type" evidence="1">
    <location>
        <begin position="6"/>
        <end position="69"/>
    </location>
</feature>
<feature type="DNA-binding region" description="H-T-H motif" evidence="1">
    <location>
        <begin position="25"/>
        <end position="44"/>
    </location>
</feature>
<proteinExistence type="evidence at protein level"/>
<accession>Q980W9</accession>
<sequence length="142" mass="16096">MGNANIDESDLKILEILKKNARTPYTLIAKELKVSEAAIRKRIEKLIRQGIIKRFTIEYELENEIRAIVMVQSTPQIPTPEISKKIAKIPGVEVVYETTGDYDILVIVRGTNITSINRTIDEIRSIQGVVGTNSTIILRTWF</sequence>
<keyword id="KW-0010">Activator</keyword>
<keyword id="KW-0963">Cytoplasm</keyword>
<keyword id="KW-0238">DNA-binding</keyword>
<keyword id="KW-1185">Reference proteome</keyword>
<keyword id="KW-0804">Transcription</keyword>
<keyword id="KW-0805">Transcription regulation</keyword>
<evidence type="ECO:0000255" key="1">
    <source>
        <dbReference type="PROSITE-ProRule" id="PRU00319"/>
    </source>
</evidence>
<evidence type="ECO:0000269" key="2">
    <source>
    </source>
</evidence>
<evidence type="ECO:0000305" key="3"/>